<dbReference type="EMBL" id="AB169588">
    <property type="protein sequence ID" value="BAE01670.1"/>
    <property type="molecule type" value="mRNA"/>
</dbReference>
<dbReference type="RefSeq" id="NP_001274655.1">
    <property type="nucleotide sequence ID" value="NM_001287726.1"/>
</dbReference>
<dbReference type="RefSeq" id="XP_005565966.1">
    <property type="nucleotide sequence ID" value="XM_005565909.2"/>
</dbReference>
<dbReference type="SMR" id="Q4R5F5"/>
<dbReference type="Ensembl" id="ENSMFAT00000097999.1">
    <property type="protein sequence ID" value="ENSMFAP00000063010.1"/>
    <property type="gene ID" value="ENSMFAG00000040940.2"/>
</dbReference>
<dbReference type="Ensembl" id="ENSMFAT00000098426.1">
    <property type="protein sequence ID" value="ENSMFAP00000062881.1"/>
    <property type="gene ID" value="ENSMFAG00000040940.2"/>
</dbReference>
<dbReference type="GeneID" id="102143994"/>
<dbReference type="KEGG" id="mcf:102143994"/>
<dbReference type="CTD" id="3434"/>
<dbReference type="VEuPathDB" id="HostDB:ENSMFAG00000040940"/>
<dbReference type="eggNOG" id="KOG1124">
    <property type="taxonomic scope" value="Eukaryota"/>
</dbReference>
<dbReference type="GeneTree" id="ENSGT00950000182946"/>
<dbReference type="OrthoDB" id="4533at314294"/>
<dbReference type="Proteomes" id="UP000233100">
    <property type="component" value="Chromosome 9"/>
</dbReference>
<dbReference type="Bgee" id="ENSMFAG00000040940">
    <property type="expression patterns" value="Expressed in bone marrow and 13 other cell types or tissues"/>
</dbReference>
<dbReference type="GO" id="GO:0005737">
    <property type="term" value="C:cytoplasm"/>
    <property type="evidence" value="ECO:0000250"/>
    <property type="project" value="UniProtKB"/>
</dbReference>
<dbReference type="GO" id="GO:0005829">
    <property type="term" value="C:cytosol"/>
    <property type="evidence" value="ECO:0007669"/>
    <property type="project" value="TreeGrafter"/>
</dbReference>
<dbReference type="GO" id="GO:0003723">
    <property type="term" value="F:RNA binding"/>
    <property type="evidence" value="ECO:0007669"/>
    <property type="project" value="UniProtKB-KW"/>
</dbReference>
<dbReference type="GO" id="GO:0140610">
    <property type="term" value="F:RNA sequestering activity"/>
    <property type="evidence" value="ECO:0000250"/>
    <property type="project" value="UniProtKB"/>
</dbReference>
<dbReference type="GO" id="GO:0051607">
    <property type="term" value="P:defense response to virus"/>
    <property type="evidence" value="ECO:0007669"/>
    <property type="project" value="UniProtKB-KW"/>
</dbReference>
<dbReference type="GO" id="GO:0045087">
    <property type="term" value="P:innate immune response"/>
    <property type="evidence" value="ECO:0007669"/>
    <property type="project" value="UniProtKB-KW"/>
</dbReference>
<dbReference type="GO" id="GO:0009615">
    <property type="term" value="P:response to virus"/>
    <property type="evidence" value="ECO:0000250"/>
    <property type="project" value="UniProtKB"/>
</dbReference>
<dbReference type="FunFam" id="1.25.40.10:FF:000026">
    <property type="entry name" value="Interferon-induced protein with tetratricopeptide repeats 5"/>
    <property type="match status" value="1"/>
</dbReference>
<dbReference type="Gene3D" id="1.25.40.10">
    <property type="entry name" value="Tetratricopeptide repeat domain"/>
    <property type="match status" value="3"/>
</dbReference>
<dbReference type="InterPro" id="IPR011990">
    <property type="entry name" value="TPR-like_helical_dom_sf"/>
</dbReference>
<dbReference type="InterPro" id="IPR013105">
    <property type="entry name" value="TPR_2"/>
</dbReference>
<dbReference type="InterPro" id="IPR019734">
    <property type="entry name" value="TPR_rpt"/>
</dbReference>
<dbReference type="PANTHER" id="PTHR10271">
    <property type="entry name" value="INTERFERON-INDUCED PROTEIN WITH TETRATRICOPEPTIDE REPEATS"/>
    <property type="match status" value="1"/>
</dbReference>
<dbReference type="PANTHER" id="PTHR10271:SF34">
    <property type="entry name" value="INTERFERON-INDUCED PROTEIN WITH TETRATRICOPEPTIDE REPEATS 1"/>
    <property type="match status" value="1"/>
</dbReference>
<dbReference type="Pfam" id="PF13424">
    <property type="entry name" value="TPR_12"/>
    <property type="match status" value="1"/>
</dbReference>
<dbReference type="Pfam" id="PF13432">
    <property type="entry name" value="TPR_16"/>
    <property type="match status" value="1"/>
</dbReference>
<dbReference type="Pfam" id="PF14559">
    <property type="entry name" value="TPR_19"/>
    <property type="match status" value="1"/>
</dbReference>
<dbReference type="Pfam" id="PF07719">
    <property type="entry name" value="TPR_2"/>
    <property type="match status" value="1"/>
</dbReference>
<dbReference type="SMART" id="SM00028">
    <property type="entry name" value="TPR"/>
    <property type="match status" value="6"/>
</dbReference>
<dbReference type="SUPFAM" id="SSF48452">
    <property type="entry name" value="TPR-like"/>
    <property type="match status" value="3"/>
</dbReference>
<dbReference type="PROSITE" id="PS50005">
    <property type="entry name" value="TPR"/>
    <property type="match status" value="6"/>
</dbReference>
<dbReference type="PROSITE" id="PS50293">
    <property type="entry name" value="TPR_REGION"/>
    <property type="match status" value="3"/>
</dbReference>
<evidence type="ECO:0000250" key="1">
    <source>
        <dbReference type="UniProtKB" id="P09914"/>
    </source>
</evidence>
<evidence type="ECO:0000255" key="2"/>
<evidence type="ECO:0000255" key="3">
    <source>
        <dbReference type="PROSITE-ProRule" id="PRU00339"/>
    </source>
</evidence>
<evidence type="ECO:0000305" key="4"/>
<evidence type="ECO:0000312" key="5">
    <source>
        <dbReference type="EMBL" id="BAE01670.1"/>
    </source>
</evidence>
<protein>
    <recommendedName>
        <fullName evidence="1">Antiviral innate immune response effector IFIT1</fullName>
        <shortName>IFIT-1</shortName>
    </recommendedName>
    <alternativeName>
        <fullName evidence="1">Interferon-induced protein with tetratricopeptide repeats 1</fullName>
    </alternativeName>
</protein>
<gene>
    <name evidence="1" type="primary">IFIT1</name>
    <name evidence="5" type="ORF">QnpA-13470</name>
</gene>
<keyword id="KW-0051">Antiviral defense</keyword>
<keyword id="KW-0963">Cytoplasm</keyword>
<keyword id="KW-0391">Immunity</keyword>
<keyword id="KW-0399">Innate immunity</keyword>
<keyword id="KW-0597">Phosphoprotein</keyword>
<keyword id="KW-1185">Reference proteome</keyword>
<keyword id="KW-0677">Repeat</keyword>
<keyword id="KW-0694">RNA-binding</keyword>
<keyword id="KW-0802">TPR repeat</keyword>
<keyword id="KW-0832">Ubl conjugation</keyword>
<sequence>MSTNGDNHQVKDSLEQLRCHFTWELFIEDDEMPDLENRVLDQIEFLDTKYNVGIHNLLAYVKHLKGQNEEALKSLKEAEDLMQKEHANQASVRSLVTWSNFAWVYYHMGRLAEAQAYLDKVENICKKPSNPFRYRMECPEIDCEEGWALLKCGGKNYERAKACFEKALEGDHENPEFSTGYAISAYRLDGFKLATKGYRQFSLLPLRQAVSLNPDNGYLKVLLALKLQDNGQEAEGEKYLEEALANMSSQTYVFRYAAKFYRRKGSVDKALELLKKALQETPTSVLLHHQIGLCYKAQMIQIKEATKGQPRGQNREKIDKMIRLAIFHFESAVENKPTFEVAHLDLARMYIEAGNHRKAEETFQKLLCMKPVVEETMQDIHLQYARFQEFQKKSEINAIIHYLKAIKIEQTSFIRDKSINSLKKLVLKKLQRNALDLESLSLLGFVYKLKGNMNEALEYYERALRLAADFENSVRQGP</sequence>
<feature type="chain" id="PRO_0000285729" description="Antiviral innate immune response effector IFIT1">
    <location>
        <begin position="1"/>
        <end position="478"/>
    </location>
</feature>
<feature type="repeat" description="TPR 1" evidence="3">
    <location>
        <begin position="52"/>
        <end position="85"/>
    </location>
</feature>
<feature type="repeat" description="TPR 2" evidence="3">
    <location>
        <begin position="95"/>
        <end position="128"/>
    </location>
</feature>
<feature type="repeat" description="TPR 3" evidence="3">
    <location>
        <begin position="139"/>
        <end position="174"/>
    </location>
</feature>
<feature type="repeat" description="TPR 4" evidence="3">
    <location>
        <begin position="183"/>
        <end position="216"/>
    </location>
</feature>
<feature type="repeat" description="TPR 5" evidence="2">
    <location>
        <begin position="218"/>
        <end position="249"/>
    </location>
</feature>
<feature type="repeat" description="TPR 6" evidence="3">
    <location>
        <begin position="251"/>
        <end position="284"/>
    </location>
</feature>
<feature type="repeat" description="TPR 7" evidence="2">
    <location>
        <begin position="305"/>
        <end position="339"/>
    </location>
</feature>
<feature type="repeat" description="TPR 8" evidence="3">
    <location>
        <begin position="340"/>
        <end position="373"/>
    </location>
</feature>
<feature type="repeat" description="TPR 9" evidence="2">
    <location>
        <begin position="378"/>
        <end position="412"/>
    </location>
</feature>
<feature type="repeat" description="TPR 10" evidence="3">
    <location>
        <begin position="437"/>
        <end position="470"/>
    </location>
</feature>
<feature type="binding site" evidence="1">
    <location>
        <position position="147"/>
    </location>
    <ligand>
        <name>mRNA</name>
        <dbReference type="ChEBI" id="CHEBI:33699"/>
    </ligand>
    <ligandPart>
        <name>5'-(N(7)-methyl 5'-triphosphoguanosine)-(2'-O-methyl-ribonucleoside) residue</name>
        <dbReference type="ChEBI" id="CHEBI:167609"/>
    </ligandPart>
</feature>
<feature type="binding site" evidence="1">
    <location>
        <position position="190"/>
    </location>
    <ligand>
        <name>RNA</name>
        <dbReference type="ChEBI" id="CHEBI:33697"/>
    </ligand>
</feature>
<feature type="binding site" evidence="1">
    <location>
        <position position="259"/>
    </location>
    <ligand>
        <name>RNA</name>
        <dbReference type="ChEBI" id="CHEBI:33697"/>
    </ligand>
</feature>
<feature type="binding site" evidence="1">
    <location>
        <position position="289"/>
    </location>
    <ligand>
        <name>RNA</name>
        <dbReference type="ChEBI" id="CHEBI:33697"/>
    </ligand>
</feature>
<feature type="binding site" evidence="1">
    <location>
        <position position="290"/>
    </location>
    <ligand>
        <name>RNA</name>
        <dbReference type="ChEBI" id="CHEBI:33697"/>
    </ligand>
</feature>
<feature type="binding site" evidence="1">
    <location>
        <position position="336"/>
    </location>
    <ligand>
        <name>RNA</name>
        <dbReference type="ChEBI" id="CHEBI:33697"/>
    </ligand>
</feature>
<proteinExistence type="evidence at transcript level"/>
<comment type="function">
    <text evidence="1">Plays a key role in the innate immune response as part of an interferon-dependent multiprotein complex, recognizing and sequestering viral RNAs that lack host-specific 2'-O-methylation at their 5' cap. By distinguishing these RNAs from host mRNAs, inhibits their translation by competing with the translation initiation factor eIF4E. Could also prevent viral replication through its interaction with DNA replication origin-binding protein E1 of several viruses. Causes the translocation of E1 from the nucleus to the cytoplasm and can also inhibit its helicase activity in vitro.</text>
</comment>
<comment type="subunit">
    <text evidence="1">Component of an interferon-dependent multiprotein complex, at least composed of IFIT1, IFIT2 and IFIT3. Interacts (via TPR repeats 1-4) with RPL15. Interacts with STING1/MITA; could disrupt STING1 interaction with MAVS or TBK1, acting as a negative-feedback regulator of virus-triggered signaling. Interacts with EIF3E; this could be an alternative way to inhibit translation.</text>
</comment>
<comment type="subcellular location">
    <subcellularLocation>
        <location evidence="1">Cytoplasm</location>
    </subcellularLocation>
</comment>
<comment type="PTM">
    <text evidence="1">Phosphorylated.</text>
</comment>
<comment type="PTM">
    <text evidence="1">ISGylated.</text>
</comment>
<comment type="similarity">
    <text evidence="4">Belongs to the IFIT family.</text>
</comment>
<name>IFIT1_MACFA</name>
<accession>Q4R5F5</accession>
<organism>
    <name type="scientific">Macaca fascicularis</name>
    <name type="common">Crab-eating macaque</name>
    <name type="synonym">Cynomolgus monkey</name>
    <dbReference type="NCBI Taxonomy" id="9541"/>
    <lineage>
        <taxon>Eukaryota</taxon>
        <taxon>Metazoa</taxon>
        <taxon>Chordata</taxon>
        <taxon>Craniata</taxon>
        <taxon>Vertebrata</taxon>
        <taxon>Euteleostomi</taxon>
        <taxon>Mammalia</taxon>
        <taxon>Eutheria</taxon>
        <taxon>Euarchontoglires</taxon>
        <taxon>Primates</taxon>
        <taxon>Haplorrhini</taxon>
        <taxon>Catarrhini</taxon>
        <taxon>Cercopithecidae</taxon>
        <taxon>Cercopithecinae</taxon>
        <taxon>Macaca</taxon>
    </lineage>
</organism>
<reference key="1">
    <citation type="submission" date="2005-06" db="EMBL/GenBank/DDBJ databases">
        <title>DNA sequences of macaque genes expressed in brain or testis and its evolutionary implications.</title>
        <authorList>
            <consortium name="International consortium for macaque cDNA sequencing and analysis"/>
        </authorList>
    </citation>
    <scope>NUCLEOTIDE SEQUENCE [LARGE SCALE MRNA]</scope>
    <source>
        <tissue>Parietal cortex</tissue>
    </source>
</reference>